<proteinExistence type="inferred from homology"/>
<dbReference type="EC" id="1.2.1.41" evidence="1"/>
<dbReference type="EMBL" id="CT971583">
    <property type="protein sequence ID" value="CAK23190.1"/>
    <property type="molecule type" value="Genomic_DNA"/>
</dbReference>
<dbReference type="SMR" id="A5GJS5"/>
<dbReference type="STRING" id="32051.SynWH7803_0764"/>
<dbReference type="KEGG" id="syx:SynWH7803_0764"/>
<dbReference type="eggNOG" id="COG0014">
    <property type="taxonomic scope" value="Bacteria"/>
</dbReference>
<dbReference type="HOGENOM" id="CLU_030231_0_1_3"/>
<dbReference type="OrthoDB" id="9809970at2"/>
<dbReference type="UniPathway" id="UPA00098">
    <property type="reaction ID" value="UER00360"/>
</dbReference>
<dbReference type="Proteomes" id="UP000001566">
    <property type="component" value="Chromosome"/>
</dbReference>
<dbReference type="GO" id="GO:0005737">
    <property type="term" value="C:cytoplasm"/>
    <property type="evidence" value="ECO:0007669"/>
    <property type="project" value="UniProtKB-SubCell"/>
</dbReference>
<dbReference type="GO" id="GO:0004350">
    <property type="term" value="F:glutamate-5-semialdehyde dehydrogenase activity"/>
    <property type="evidence" value="ECO:0007669"/>
    <property type="project" value="UniProtKB-UniRule"/>
</dbReference>
<dbReference type="GO" id="GO:0050661">
    <property type="term" value="F:NADP binding"/>
    <property type="evidence" value="ECO:0007669"/>
    <property type="project" value="InterPro"/>
</dbReference>
<dbReference type="GO" id="GO:0055129">
    <property type="term" value="P:L-proline biosynthetic process"/>
    <property type="evidence" value="ECO:0007669"/>
    <property type="project" value="UniProtKB-UniRule"/>
</dbReference>
<dbReference type="CDD" id="cd07079">
    <property type="entry name" value="ALDH_F18-19_ProA-GPR"/>
    <property type="match status" value="1"/>
</dbReference>
<dbReference type="FunFam" id="3.40.309.10:FF:000006">
    <property type="entry name" value="Gamma-glutamyl phosphate reductase"/>
    <property type="match status" value="1"/>
</dbReference>
<dbReference type="Gene3D" id="3.40.605.10">
    <property type="entry name" value="Aldehyde Dehydrogenase, Chain A, domain 1"/>
    <property type="match status" value="1"/>
</dbReference>
<dbReference type="Gene3D" id="3.40.309.10">
    <property type="entry name" value="Aldehyde Dehydrogenase, Chain A, domain 2"/>
    <property type="match status" value="1"/>
</dbReference>
<dbReference type="HAMAP" id="MF_00412">
    <property type="entry name" value="ProA"/>
    <property type="match status" value="1"/>
</dbReference>
<dbReference type="InterPro" id="IPR016161">
    <property type="entry name" value="Ald_DH/histidinol_DH"/>
</dbReference>
<dbReference type="InterPro" id="IPR016163">
    <property type="entry name" value="Ald_DH_C"/>
</dbReference>
<dbReference type="InterPro" id="IPR016162">
    <property type="entry name" value="Ald_DH_N"/>
</dbReference>
<dbReference type="InterPro" id="IPR015590">
    <property type="entry name" value="Aldehyde_DH_dom"/>
</dbReference>
<dbReference type="InterPro" id="IPR020593">
    <property type="entry name" value="G-glutamylP_reductase_CS"/>
</dbReference>
<dbReference type="InterPro" id="IPR012134">
    <property type="entry name" value="Glu-5-SA_DH"/>
</dbReference>
<dbReference type="InterPro" id="IPR000965">
    <property type="entry name" value="GPR_dom"/>
</dbReference>
<dbReference type="NCBIfam" id="NF001221">
    <property type="entry name" value="PRK00197.1"/>
    <property type="match status" value="1"/>
</dbReference>
<dbReference type="NCBIfam" id="TIGR00407">
    <property type="entry name" value="proA"/>
    <property type="match status" value="1"/>
</dbReference>
<dbReference type="PANTHER" id="PTHR11063:SF8">
    <property type="entry name" value="DELTA-1-PYRROLINE-5-CARBOXYLATE SYNTHASE"/>
    <property type="match status" value="1"/>
</dbReference>
<dbReference type="PANTHER" id="PTHR11063">
    <property type="entry name" value="GLUTAMATE SEMIALDEHYDE DEHYDROGENASE"/>
    <property type="match status" value="1"/>
</dbReference>
<dbReference type="Pfam" id="PF00171">
    <property type="entry name" value="Aldedh"/>
    <property type="match status" value="1"/>
</dbReference>
<dbReference type="PIRSF" id="PIRSF000151">
    <property type="entry name" value="GPR"/>
    <property type="match status" value="1"/>
</dbReference>
<dbReference type="SUPFAM" id="SSF53720">
    <property type="entry name" value="ALDH-like"/>
    <property type="match status" value="1"/>
</dbReference>
<dbReference type="PROSITE" id="PS01223">
    <property type="entry name" value="PROA"/>
    <property type="match status" value="1"/>
</dbReference>
<name>PROA_SYNPW</name>
<accession>A5GJS5</accession>
<sequence length="435" mass="46029">MNEVPEPSPELLQRAGAVRRAAVDLGMADDGQRMQALQAMADALAERSDALVAANREDLDRSASEGLAPALLARLKLDAAKLEGAIDGVRKVASLKDPLGRRDLHRELDQGLTLERVTVPLGVLGVIFEARPDAVIQIASLAIRSGNGALLKGGSEARCTNEAVMEALKAGLASSAVSPDALALLTTRQESLALLKLDGLVDLIIPRGSNELVRFIQDNTRIPVLGHADGICHLYVDAAADLDKAVRVALDSKTQYPAACNAIETLLVHRSVAASFLSAAIPAFRDAGVVLRGDAASVALGVPESATEADWRTEYLDLTLAVKVVDDLAAAADHIRRFGSRHTECIVTEDAAAADRFLSSIDSAGVYHNCSTRFADGFRYGFGAEVGISTQTLPPRGPVGLEGLVTYRYRLRGDGHVAADYASGASRFTHNDLSL</sequence>
<gene>
    <name evidence="1" type="primary">proA</name>
    <name type="ordered locus">SynWH7803_0764</name>
</gene>
<comment type="function">
    <text evidence="1">Catalyzes the NADPH-dependent reduction of L-glutamate 5-phosphate into L-glutamate 5-semialdehyde and phosphate. The product spontaneously undergoes cyclization to form 1-pyrroline-5-carboxylate.</text>
</comment>
<comment type="catalytic activity">
    <reaction evidence="1">
        <text>L-glutamate 5-semialdehyde + phosphate + NADP(+) = L-glutamyl 5-phosphate + NADPH + H(+)</text>
        <dbReference type="Rhea" id="RHEA:19541"/>
        <dbReference type="ChEBI" id="CHEBI:15378"/>
        <dbReference type="ChEBI" id="CHEBI:43474"/>
        <dbReference type="ChEBI" id="CHEBI:57783"/>
        <dbReference type="ChEBI" id="CHEBI:58066"/>
        <dbReference type="ChEBI" id="CHEBI:58274"/>
        <dbReference type="ChEBI" id="CHEBI:58349"/>
        <dbReference type="EC" id="1.2.1.41"/>
    </reaction>
</comment>
<comment type="pathway">
    <text evidence="1">Amino-acid biosynthesis; L-proline biosynthesis; L-glutamate 5-semialdehyde from L-glutamate: step 2/2.</text>
</comment>
<comment type="subcellular location">
    <subcellularLocation>
        <location evidence="1">Cytoplasm</location>
    </subcellularLocation>
</comment>
<comment type="similarity">
    <text evidence="1">Belongs to the gamma-glutamyl phosphate reductase family.</text>
</comment>
<reference key="1">
    <citation type="submission" date="2006-05" db="EMBL/GenBank/DDBJ databases">
        <authorList>
            <consortium name="Genoscope"/>
        </authorList>
    </citation>
    <scope>NUCLEOTIDE SEQUENCE [LARGE SCALE GENOMIC DNA]</scope>
    <source>
        <strain>WH7803</strain>
    </source>
</reference>
<protein>
    <recommendedName>
        <fullName evidence="1">Gamma-glutamyl phosphate reductase</fullName>
        <shortName evidence="1">GPR</shortName>
        <ecNumber evidence="1">1.2.1.41</ecNumber>
    </recommendedName>
    <alternativeName>
        <fullName evidence="1">Glutamate-5-semialdehyde dehydrogenase</fullName>
    </alternativeName>
    <alternativeName>
        <fullName evidence="1">Glutamyl-gamma-semialdehyde dehydrogenase</fullName>
        <shortName evidence="1">GSA dehydrogenase</shortName>
    </alternativeName>
</protein>
<evidence type="ECO:0000255" key="1">
    <source>
        <dbReference type="HAMAP-Rule" id="MF_00412"/>
    </source>
</evidence>
<keyword id="KW-0028">Amino-acid biosynthesis</keyword>
<keyword id="KW-0963">Cytoplasm</keyword>
<keyword id="KW-0521">NADP</keyword>
<keyword id="KW-0560">Oxidoreductase</keyword>
<keyword id="KW-0641">Proline biosynthesis</keyword>
<keyword id="KW-1185">Reference proteome</keyword>
<organism>
    <name type="scientific">Synechococcus sp. (strain WH7803)</name>
    <dbReference type="NCBI Taxonomy" id="32051"/>
    <lineage>
        <taxon>Bacteria</taxon>
        <taxon>Bacillati</taxon>
        <taxon>Cyanobacteriota</taxon>
        <taxon>Cyanophyceae</taxon>
        <taxon>Synechococcales</taxon>
        <taxon>Synechococcaceae</taxon>
        <taxon>Synechococcus</taxon>
    </lineage>
</organism>
<feature type="chain" id="PRO_1000050002" description="Gamma-glutamyl phosphate reductase">
    <location>
        <begin position="1"/>
        <end position="435"/>
    </location>
</feature>